<name>CDKA2_ORYSJ</name>
<comment type="catalytic activity">
    <reaction>
        <text>L-seryl-[protein] + ATP = O-phospho-L-seryl-[protein] + ADP + H(+)</text>
        <dbReference type="Rhea" id="RHEA:17989"/>
        <dbReference type="Rhea" id="RHEA-COMP:9863"/>
        <dbReference type="Rhea" id="RHEA-COMP:11604"/>
        <dbReference type="ChEBI" id="CHEBI:15378"/>
        <dbReference type="ChEBI" id="CHEBI:29999"/>
        <dbReference type="ChEBI" id="CHEBI:30616"/>
        <dbReference type="ChEBI" id="CHEBI:83421"/>
        <dbReference type="ChEBI" id="CHEBI:456216"/>
        <dbReference type="EC" id="2.7.11.22"/>
    </reaction>
</comment>
<comment type="catalytic activity">
    <reaction>
        <text>L-threonyl-[protein] + ATP = O-phospho-L-threonyl-[protein] + ADP + H(+)</text>
        <dbReference type="Rhea" id="RHEA:46608"/>
        <dbReference type="Rhea" id="RHEA-COMP:11060"/>
        <dbReference type="Rhea" id="RHEA-COMP:11605"/>
        <dbReference type="ChEBI" id="CHEBI:15378"/>
        <dbReference type="ChEBI" id="CHEBI:30013"/>
        <dbReference type="ChEBI" id="CHEBI:30616"/>
        <dbReference type="ChEBI" id="CHEBI:61977"/>
        <dbReference type="ChEBI" id="CHEBI:456216"/>
        <dbReference type="EC" id="2.7.11.22"/>
    </reaction>
</comment>
<comment type="catalytic activity">
    <reaction>
        <text>[DNA-directed RNA polymerase] + ATP = phospho-[DNA-directed RNA polymerase] + ADP + H(+)</text>
        <dbReference type="Rhea" id="RHEA:10216"/>
        <dbReference type="Rhea" id="RHEA-COMP:11321"/>
        <dbReference type="Rhea" id="RHEA-COMP:11322"/>
        <dbReference type="ChEBI" id="CHEBI:15378"/>
        <dbReference type="ChEBI" id="CHEBI:30616"/>
        <dbReference type="ChEBI" id="CHEBI:43176"/>
        <dbReference type="ChEBI" id="CHEBI:68546"/>
        <dbReference type="ChEBI" id="CHEBI:456216"/>
        <dbReference type="EC" id="2.7.11.23"/>
    </reaction>
</comment>
<comment type="tissue specificity">
    <text evidence="5 8">Expressed in the dividing region of the root apex and in differentiated cells such as those in the sclerenchyma, pericycle and parenchyma of the central cylinder. Expressed in the intercalary meristem and the elongation zone of internodes.</text>
</comment>
<comment type="developmental stage">
    <text evidence="6">Expression reaches a peak in the G1/S phases and then decreases in the G2/M phases.</text>
</comment>
<comment type="induction">
    <text evidence="4 5 7">By gibberellic acid (GA3) and submergence. Down-regulated by auxin.</text>
</comment>
<comment type="similarity">
    <text evidence="9">Belongs to the protein kinase superfamily. CMGC Ser/Thr protein kinase family. CDC2/CDKX subfamily.</text>
</comment>
<comment type="sequence caution" evidence="9">
    <conflict type="erroneous gene model prediction">
        <sequence resource="EMBL-CDS" id="BAD07950"/>
    </conflict>
</comment>
<keyword id="KW-0067">ATP-binding</keyword>
<keyword id="KW-0418">Kinase</keyword>
<keyword id="KW-0547">Nucleotide-binding</keyword>
<keyword id="KW-0597">Phosphoprotein</keyword>
<keyword id="KW-1185">Reference proteome</keyword>
<keyword id="KW-0723">Serine/threonine-protein kinase</keyword>
<keyword id="KW-0808">Transferase</keyword>
<accession>P29619</accession>
<accession>B7ERM3</accession>
<accession>Q0E4E3</accession>
<accession>Q6Z721</accession>
<accession>Q6Z722</accession>
<organism>
    <name type="scientific">Oryza sativa subsp. japonica</name>
    <name type="common">Rice</name>
    <dbReference type="NCBI Taxonomy" id="39947"/>
    <lineage>
        <taxon>Eukaryota</taxon>
        <taxon>Viridiplantae</taxon>
        <taxon>Streptophyta</taxon>
        <taxon>Embryophyta</taxon>
        <taxon>Tracheophyta</taxon>
        <taxon>Spermatophyta</taxon>
        <taxon>Magnoliopsida</taxon>
        <taxon>Liliopsida</taxon>
        <taxon>Poales</taxon>
        <taxon>Poaceae</taxon>
        <taxon>BOP clade</taxon>
        <taxon>Oryzoideae</taxon>
        <taxon>Oryzeae</taxon>
        <taxon>Oryzinae</taxon>
        <taxon>Oryza</taxon>
        <taxon>Oryza sativa</taxon>
    </lineage>
</organism>
<dbReference type="EC" id="2.7.11.22"/>
<dbReference type="EC" id="2.7.11.23"/>
<dbReference type="EMBL" id="X60375">
    <property type="protein sequence ID" value="CAA42923.1"/>
    <property type="molecule type" value="mRNA"/>
</dbReference>
<dbReference type="EMBL" id="AP004885">
    <property type="protein sequence ID" value="BAD07949.1"/>
    <property type="molecule type" value="Genomic_DNA"/>
</dbReference>
<dbReference type="EMBL" id="AP004885">
    <property type="protein sequence ID" value="BAD07950.1"/>
    <property type="status" value="ALT_SEQ"/>
    <property type="molecule type" value="Genomic_DNA"/>
</dbReference>
<dbReference type="EMBL" id="AP008208">
    <property type="protein sequence ID" value="BAF07645.1"/>
    <property type="molecule type" value="Genomic_DNA"/>
</dbReference>
<dbReference type="EMBL" id="AP014958">
    <property type="protein sequence ID" value="BAS76730.1"/>
    <property type="molecule type" value="Genomic_DNA"/>
</dbReference>
<dbReference type="EMBL" id="AK101344">
    <property type="protein sequence ID" value="BAG95020.1"/>
    <property type="molecule type" value="mRNA"/>
</dbReference>
<dbReference type="PIR" id="S22441">
    <property type="entry name" value="S22441"/>
</dbReference>
<dbReference type="RefSeq" id="XP_015623588.1">
    <property type="nucleotide sequence ID" value="XM_015768102.1"/>
</dbReference>
<dbReference type="SMR" id="P29619"/>
<dbReference type="FunCoup" id="P29619">
    <property type="interactions" value="1822"/>
</dbReference>
<dbReference type="STRING" id="39947.P29619"/>
<dbReference type="PaxDb" id="39947-P29619"/>
<dbReference type="EnsemblPlants" id="Os02t0123100-03">
    <property type="protein sequence ID" value="Os02t0123100-03"/>
    <property type="gene ID" value="Os02g0123100"/>
</dbReference>
<dbReference type="Gramene" id="Os02t0123100-03">
    <property type="protein sequence ID" value="Os02t0123100-03"/>
    <property type="gene ID" value="Os02g0123100"/>
</dbReference>
<dbReference type="KEGG" id="dosa:Os02g0123100"/>
<dbReference type="eggNOG" id="KOG0594">
    <property type="taxonomic scope" value="Eukaryota"/>
</dbReference>
<dbReference type="HOGENOM" id="CLU_000288_181_6_1"/>
<dbReference type="InParanoid" id="P29619"/>
<dbReference type="OrthoDB" id="1732493at2759"/>
<dbReference type="PlantReactome" id="R-OSA-9640760">
    <property type="pathway name" value="G1 phase"/>
</dbReference>
<dbReference type="PlantReactome" id="R-OSA-9640887">
    <property type="pathway name" value="G1/S transition"/>
</dbReference>
<dbReference type="Proteomes" id="UP000000763">
    <property type="component" value="Chromosome 2"/>
</dbReference>
<dbReference type="Proteomes" id="UP000059680">
    <property type="component" value="Chromosome 2"/>
</dbReference>
<dbReference type="ExpressionAtlas" id="P29619">
    <property type="expression patterns" value="baseline and differential"/>
</dbReference>
<dbReference type="GO" id="GO:0000307">
    <property type="term" value="C:cyclin-dependent protein kinase holoenzyme complex"/>
    <property type="evidence" value="ECO:0000318"/>
    <property type="project" value="GO_Central"/>
</dbReference>
<dbReference type="GO" id="GO:0005737">
    <property type="term" value="C:cytoplasm"/>
    <property type="evidence" value="ECO:0000318"/>
    <property type="project" value="GO_Central"/>
</dbReference>
<dbReference type="GO" id="GO:0005634">
    <property type="term" value="C:nucleus"/>
    <property type="evidence" value="ECO:0000250"/>
    <property type="project" value="UniProtKB"/>
</dbReference>
<dbReference type="GO" id="GO:0016581">
    <property type="term" value="C:NuRD complex"/>
    <property type="evidence" value="ECO:0000250"/>
    <property type="project" value="UniProtKB"/>
</dbReference>
<dbReference type="GO" id="GO:0005524">
    <property type="term" value="F:ATP binding"/>
    <property type="evidence" value="ECO:0007669"/>
    <property type="project" value="UniProtKB-KW"/>
</dbReference>
<dbReference type="GO" id="GO:0030332">
    <property type="term" value="F:cyclin binding"/>
    <property type="evidence" value="ECO:0000318"/>
    <property type="project" value="GO_Central"/>
</dbReference>
<dbReference type="GO" id="GO:0004693">
    <property type="term" value="F:cyclin-dependent protein serine/threonine kinase activity"/>
    <property type="evidence" value="ECO:0000318"/>
    <property type="project" value="GO_Central"/>
</dbReference>
<dbReference type="GO" id="GO:0106310">
    <property type="term" value="F:protein serine kinase activity"/>
    <property type="evidence" value="ECO:0007669"/>
    <property type="project" value="RHEA"/>
</dbReference>
<dbReference type="GO" id="GO:0008353">
    <property type="term" value="F:RNA polymerase II CTD heptapeptide repeat kinase activity"/>
    <property type="evidence" value="ECO:0007669"/>
    <property type="project" value="UniProtKB-EC"/>
</dbReference>
<dbReference type="GO" id="GO:0000082">
    <property type="term" value="P:G1/S transition of mitotic cell cycle"/>
    <property type="evidence" value="ECO:0000318"/>
    <property type="project" value="GO_Central"/>
</dbReference>
<dbReference type="GO" id="GO:0010389">
    <property type="term" value="P:regulation of G2/M transition of mitotic cell cycle"/>
    <property type="evidence" value="ECO:0000318"/>
    <property type="project" value="GO_Central"/>
</dbReference>
<dbReference type="GO" id="GO:0010468">
    <property type="term" value="P:regulation of gene expression"/>
    <property type="evidence" value="ECO:0000318"/>
    <property type="project" value="GO_Central"/>
</dbReference>
<dbReference type="GO" id="GO:0051445">
    <property type="term" value="P:regulation of meiotic cell cycle"/>
    <property type="evidence" value="ECO:0000318"/>
    <property type="project" value="GO_Central"/>
</dbReference>
<dbReference type="GO" id="GO:0007165">
    <property type="term" value="P:signal transduction"/>
    <property type="evidence" value="ECO:0000318"/>
    <property type="project" value="GO_Central"/>
</dbReference>
<dbReference type="CDD" id="cd07835">
    <property type="entry name" value="STKc_CDK1_CdkB_like"/>
    <property type="match status" value="1"/>
</dbReference>
<dbReference type="FunFam" id="3.30.200.20:FF:000187">
    <property type="entry name" value="Cell division control protein 2"/>
    <property type="match status" value="1"/>
</dbReference>
<dbReference type="FunFam" id="1.10.510.10:FF:000280">
    <property type="entry name" value="Cell division control protein 2 homolog"/>
    <property type="match status" value="1"/>
</dbReference>
<dbReference type="Gene3D" id="3.30.200.20">
    <property type="entry name" value="Phosphorylase Kinase, domain 1"/>
    <property type="match status" value="1"/>
</dbReference>
<dbReference type="Gene3D" id="1.10.510.10">
    <property type="entry name" value="Transferase(Phosphotransferase) domain 1"/>
    <property type="match status" value="1"/>
</dbReference>
<dbReference type="InterPro" id="IPR050108">
    <property type="entry name" value="CDK"/>
</dbReference>
<dbReference type="InterPro" id="IPR011009">
    <property type="entry name" value="Kinase-like_dom_sf"/>
</dbReference>
<dbReference type="InterPro" id="IPR000719">
    <property type="entry name" value="Prot_kinase_dom"/>
</dbReference>
<dbReference type="InterPro" id="IPR017441">
    <property type="entry name" value="Protein_kinase_ATP_BS"/>
</dbReference>
<dbReference type="InterPro" id="IPR008271">
    <property type="entry name" value="Ser/Thr_kinase_AS"/>
</dbReference>
<dbReference type="PANTHER" id="PTHR24056">
    <property type="entry name" value="CELL DIVISION PROTEIN KINASE"/>
    <property type="match status" value="1"/>
</dbReference>
<dbReference type="PANTHER" id="PTHR24056:SF548">
    <property type="entry name" value="CYCLIN-DEPENDENT KINASE A-1"/>
    <property type="match status" value="1"/>
</dbReference>
<dbReference type="Pfam" id="PF00069">
    <property type="entry name" value="Pkinase"/>
    <property type="match status" value="1"/>
</dbReference>
<dbReference type="SMART" id="SM00220">
    <property type="entry name" value="S_TKc"/>
    <property type="match status" value="1"/>
</dbReference>
<dbReference type="SUPFAM" id="SSF56112">
    <property type="entry name" value="Protein kinase-like (PK-like)"/>
    <property type="match status" value="1"/>
</dbReference>
<dbReference type="PROSITE" id="PS00107">
    <property type="entry name" value="PROTEIN_KINASE_ATP"/>
    <property type="match status" value="1"/>
</dbReference>
<dbReference type="PROSITE" id="PS50011">
    <property type="entry name" value="PROTEIN_KINASE_DOM"/>
    <property type="match status" value="1"/>
</dbReference>
<dbReference type="PROSITE" id="PS00108">
    <property type="entry name" value="PROTEIN_KINASE_ST"/>
    <property type="match status" value="1"/>
</dbReference>
<sequence>MEQYEKVEKIGEGTYGVVYKGKHRHTNETIALKKIRLEQEDEGVPSTAIREISLLKEMQHRNIVRLQDVVHKEKCIYLVFEYLDLDLKKHMDSSPDFKNHRIVKSFLYQILRGIAYCHSHRVLHRDLKPQNLLIDRRTNSLKLADFGLARAFGIPVRTFTHEVVTLWYRAPEILLGARHYSTPVDMWSVGCIFAEMVNQKPLFPGDSEIDELFKIFSIMGTPNEETWPGVASLPDYISTFPKWPSVDLATVVPTLDSSGLDLLSKMLRLDPSKRINARAALEHEYFKDLEVA</sequence>
<feature type="chain" id="PRO_0000085756" description="Cyclin-dependent kinase A-2">
    <location>
        <begin position="1"/>
        <end position="292"/>
    </location>
</feature>
<feature type="domain" description="Protein kinase" evidence="2">
    <location>
        <begin position="4"/>
        <end position="286"/>
    </location>
</feature>
<feature type="active site" description="Proton acceptor" evidence="2 3">
    <location>
        <position position="126"/>
    </location>
</feature>
<feature type="binding site" evidence="2">
    <location>
        <begin position="10"/>
        <end position="18"/>
    </location>
    <ligand>
        <name>ATP</name>
        <dbReference type="ChEBI" id="CHEBI:30616"/>
    </ligand>
</feature>
<feature type="binding site" evidence="2">
    <location>
        <position position="33"/>
    </location>
    <ligand>
        <name>ATP</name>
        <dbReference type="ChEBI" id="CHEBI:30616"/>
    </ligand>
</feature>
<feature type="modified residue" description="Phosphothreonine" evidence="1">
    <location>
        <position position="14"/>
    </location>
</feature>
<feature type="modified residue" description="Phosphotyrosine" evidence="1">
    <location>
        <position position="15"/>
    </location>
</feature>
<feature type="modified residue" description="Phosphothreonine" evidence="1">
    <location>
        <position position="160"/>
    </location>
</feature>
<reference key="1">
    <citation type="journal article" date="1992" name="Mol. Gen. Genet.">
        <title>Isolation and characterization of cDNA clones encoding cdc2 homologues from Oryza sativa: a functional homologue and cognate variants.</title>
        <authorList>
            <person name="Hashimoto J."/>
            <person name="Hirabayashi T."/>
            <person name="Hayano Y."/>
            <person name="Hata S."/>
            <person name="Ohashi Y."/>
            <person name="Suzuka I."/>
            <person name="Utsugi T."/>
            <person name="Toh-e A."/>
            <person name="Kikuchi Y."/>
        </authorList>
    </citation>
    <scope>NUCLEOTIDE SEQUENCE [MRNA]</scope>
    <source>
        <strain>cv. Nipponbare</strain>
    </source>
</reference>
<reference key="2">
    <citation type="journal article" date="2005" name="Nature">
        <title>The map-based sequence of the rice genome.</title>
        <authorList>
            <consortium name="International rice genome sequencing project (IRGSP)"/>
        </authorList>
    </citation>
    <scope>NUCLEOTIDE SEQUENCE [LARGE SCALE GENOMIC DNA]</scope>
    <source>
        <strain>cv. Nipponbare</strain>
    </source>
</reference>
<reference key="3">
    <citation type="journal article" date="2008" name="Nucleic Acids Res.">
        <title>The rice annotation project database (RAP-DB): 2008 update.</title>
        <authorList>
            <consortium name="The rice annotation project (RAP)"/>
        </authorList>
    </citation>
    <scope>GENOME REANNOTATION</scope>
    <source>
        <strain>cv. Nipponbare</strain>
    </source>
</reference>
<reference key="4">
    <citation type="journal article" date="2013" name="Rice">
        <title>Improvement of the Oryza sativa Nipponbare reference genome using next generation sequence and optical map data.</title>
        <authorList>
            <person name="Kawahara Y."/>
            <person name="de la Bastide M."/>
            <person name="Hamilton J.P."/>
            <person name="Kanamori H."/>
            <person name="McCombie W.R."/>
            <person name="Ouyang S."/>
            <person name="Schwartz D.C."/>
            <person name="Tanaka T."/>
            <person name="Wu J."/>
            <person name="Zhou S."/>
            <person name="Childs K.L."/>
            <person name="Davidson R.M."/>
            <person name="Lin H."/>
            <person name="Quesada-Ocampo L."/>
            <person name="Vaillancourt B."/>
            <person name="Sakai H."/>
            <person name="Lee S.S."/>
            <person name="Kim J."/>
            <person name="Numa H."/>
            <person name="Itoh T."/>
            <person name="Buell C.R."/>
            <person name="Matsumoto T."/>
        </authorList>
    </citation>
    <scope>GENOME REANNOTATION</scope>
    <source>
        <strain>cv. Nipponbare</strain>
    </source>
</reference>
<reference key="5">
    <citation type="journal article" date="2003" name="Science">
        <title>Collection, mapping, and annotation of over 28,000 cDNA clones from japonica rice.</title>
        <authorList>
            <consortium name="The rice full-length cDNA consortium"/>
        </authorList>
    </citation>
    <scope>NUCLEOTIDE SEQUENCE [LARGE SCALE MRNA]</scope>
    <source>
        <strain>cv. Nipponbare</strain>
    </source>
</reference>
<reference key="6">
    <citation type="journal article" date="1995" name="Plant J.">
        <title>Gibberellin promotes histone H1 kinase activity and the expression of cdc2 and cyclin genes during the induction of rapid growth in deepwater rice internodes.</title>
        <authorList>
            <person name="Sauter M."/>
            <person name="Mekhedov S.L."/>
            <person name="Kende H."/>
        </authorList>
    </citation>
    <scope>TISSUE SPECIFICITY</scope>
    <scope>INDUCTION</scope>
</reference>
<reference key="7">
    <citation type="journal article" date="1997" name="Plant J.">
        <title>Differential expression of a CAK (cdc2-activating kinase)-like protein kinase, cyclins and cdc2 genes from rice during the cell cycle and in response to gibberellin.</title>
        <authorList>
            <person name="Sauter M."/>
        </authorList>
    </citation>
    <scope>DEVELOPMENTAL STAGE</scope>
</reference>
<reference key="8">
    <citation type="journal article" date="1999" name="Plant Physiol.">
        <title>Adventitious root growth and cell-cycle induction in deepwater rice.</title>
        <authorList>
            <person name="Lorbiecke R."/>
            <person name="Sauter M."/>
        </authorList>
    </citation>
    <scope>INDUCTION</scope>
</reference>
<reference key="9">
    <citation type="journal article" date="1999" name="Plant Physiol.">
        <title>Differential expression of genes for cyclin-dependent protein kinases in rice plants.</title>
        <authorList>
            <person name="Umeda M."/>
            <person name="Umeda-Hara C."/>
            <person name="Yamaguchi M."/>
            <person name="Hashimoto J."/>
            <person name="Uchimiya H."/>
        </authorList>
    </citation>
    <scope>TISSUE SPECIFICITY</scope>
</reference>
<reference key="10">
    <citation type="journal article" date="2007" name="Plant Mol. Biol.">
        <title>Genome-wide identification and expression analysis of rice cell cycle genes.</title>
        <authorList>
            <person name="Guo J."/>
            <person name="Song J."/>
            <person name="Wang F."/>
            <person name="Zhang X.S."/>
        </authorList>
    </citation>
    <scope>INDUCTION AND GENE FAMILY</scope>
</reference>
<proteinExistence type="evidence at transcript level"/>
<gene>
    <name type="primary">CDKA-2</name>
    <name type="synonym">CDC2-2</name>
    <name type="ordered locus">Os02g0123100</name>
    <name type="ordered locus">LOC_Os02g03060</name>
    <name type="ORF">P0575F10.10-1</name>
    <name type="ORF">P0575F10.10-2</name>
</gene>
<protein>
    <recommendedName>
        <fullName>Cyclin-dependent kinase A-2</fullName>
        <shortName>CDKA;2</shortName>
        <ecNumber>2.7.11.22</ecNumber>
        <ecNumber>2.7.11.23</ecNumber>
    </recommendedName>
    <alternativeName>
        <fullName>CDC2Os-2</fullName>
    </alternativeName>
    <alternativeName>
        <fullName>Cell division control protein 2 homolog 2</fullName>
    </alternativeName>
</protein>
<evidence type="ECO:0000250" key="1"/>
<evidence type="ECO:0000255" key="2">
    <source>
        <dbReference type="PROSITE-ProRule" id="PRU00159"/>
    </source>
</evidence>
<evidence type="ECO:0000255" key="3">
    <source>
        <dbReference type="PROSITE-ProRule" id="PRU10027"/>
    </source>
</evidence>
<evidence type="ECO:0000269" key="4">
    <source>
    </source>
</evidence>
<evidence type="ECO:0000269" key="5">
    <source>
    </source>
</evidence>
<evidence type="ECO:0000269" key="6">
    <source>
    </source>
</evidence>
<evidence type="ECO:0000269" key="7">
    <source>
    </source>
</evidence>
<evidence type="ECO:0000269" key="8">
    <source>
    </source>
</evidence>
<evidence type="ECO:0000305" key="9"/>